<keyword id="KW-0687">Ribonucleoprotein</keyword>
<keyword id="KW-0689">Ribosomal protein</keyword>
<keyword id="KW-0694">RNA-binding</keyword>
<keyword id="KW-0699">rRNA-binding</keyword>
<sequence>MCANNKSALKRAQIAERNRVRNKTYKSSVKTLMKNYLSAVQAYAANPTPESKQEAQTRLAAAYSRIDKAVKRGILHPNNGARKKSRLASKLKPIEQTA</sequence>
<protein>
    <recommendedName>
        <fullName evidence="1">Small ribosomal subunit protein bS20</fullName>
    </recommendedName>
    <alternativeName>
        <fullName evidence="3">30S ribosomal protein S20</fullName>
    </alternativeName>
</protein>
<name>RS20_TRIV2</name>
<accession>Q3M5D2</accession>
<dbReference type="EMBL" id="CP000117">
    <property type="protein sequence ID" value="ABA23804.1"/>
    <property type="status" value="ALT_INIT"/>
    <property type="molecule type" value="Genomic_DNA"/>
</dbReference>
<dbReference type="SMR" id="Q3M5D2"/>
<dbReference type="STRING" id="240292.Ava_4205"/>
<dbReference type="KEGG" id="ava:Ava_4205"/>
<dbReference type="eggNOG" id="COG0268">
    <property type="taxonomic scope" value="Bacteria"/>
</dbReference>
<dbReference type="HOGENOM" id="CLU_160655_5_0_3"/>
<dbReference type="Proteomes" id="UP000002533">
    <property type="component" value="Chromosome"/>
</dbReference>
<dbReference type="GO" id="GO:0005829">
    <property type="term" value="C:cytosol"/>
    <property type="evidence" value="ECO:0007669"/>
    <property type="project" value="TreeGrafter"/>
</dbReference>
<dbReference type="GO" id="GO:0015935">
    <property type="term" value="C:small ribosomal subunit"/>
    <property type="evidence" value="ECO:0007669"/>
    <property type="project" value="TreeGrafter"/>
</dbReference>
<dbReference type="GO" id="GO:0070181">
    <property type="term" value="F:small ribosomal subunit rRNA binding"/>
    <property type="evidence" value="ECO:0007669"/>
    <property type="project" value="TreeGrafter"/>
</dbReference>
<dbReference type="GO" id="GO:0003735">
    <property type="term" value="F:structural constituent of ribosome"/>
    <property type="evidence" value="ECO:0007669"/>
    <property type="project" value="InterPro"/>
</dbReference>
<dbReference type="GO" id="GO:0006412">
    <property type="term" value="P:translation"/>
    <property type="evidence" value="ECO:0007669"/>
    <property type="project" value="UniProtKB-UniRule"/>
</dbReference>
<dbReference type="FunFam" id="1.20.58.110:FF:000001">
    <property type="entry name" value="30S ribosomal protein S20"/>
    <property type="match status" value="1"/>
</dbReference>
<dbReference type="Gene3D" id="1.20.58.110">
    <property type="entry name" value="Ribosomal protein S20"/>
    <property type="match status" value="1"/>
</dbReference>
<dbReference type="HAMAP" id="MF_00500">
    <property type="entry name" value="Ribosomal_bS20"/>
    <property type="match status" value="1"/>
</dbReference>
<dbReference type="InterPro" id="IPR002583">
    <property type="entry name" value="Ribosomal_bS20"/>
</dbReference>
<dbReference type="InterPro" id="IPR036510">
    <property type="entry name" value="Ribosomal_bS20_sf"/>
</dbReference>
<dbReference type="NCBIfam" id="TIGR00029">
    <property type="entry name" value="S20"/>
    <property type="match status" value="1"/>
</dbReference>
<dbReference type="PANTHER" id="PTHR33398">
    <property type="entry name" value="30S RIBOSOMAL PROTEIN S20"/>
    <property type="match status" value="1"/>
</dbReference>
<dbReference type="PANTHER" id="PTHR33398:SF1">
    <property type="entry name" value="SMALL RIBOSOMAL SUBUNIT PROTEIN BS20C"/>
    <property type="match status" value="1"/>
</dbReference>
<dbReference type="Pfam" id="PF01649">
    <property type="entry name" value="Ribosomal_S20p"/>
    <property type="match status" value="1"/>
</dbReference>
<dbReference type="SUPFAM" id="SSF46992">
    <property type="entry name" value="Ribosomal protein S20"/>
    <property type="match status" value="1"/>
</dbReference>
<feature type="chain" id="PRO_0000236420" description="Small ribosomal subunit protein bS20">
    <location>
        <begin position="1"/>
        <end position="98"/>
    </location>
</feature>
<feature type="region of interest" description="Disordered" evidence="2">
    <location>
        <begin position="76"/>
        <end position="98"/>
    </location>
</feature>
<evidence type="ECO:0000255" key="1">
    <source>
        <dbReference type="HAMAP-Rule" id="MF_00500"/>
    </source>
</evidence>
<evidence type="ECO:0000256" key="2">
    <source>
        <dbReference type="SAM" id="MobiDB-lite"/>
    </source>
</evidence>
<evidence type="ECO:0000305" key="3"/>
<reference key="1">
    <citation type="journal article" date="2014" name="Stand. Genomic Sci.">
        <title>Complete genome sequence of Anabaena variabilis ATCC 29413.</title>
        <authorList>
            <person name="Thiel T."/>
            <person name="Pratte B.S."/>
            <person name="Zhong J."/>
            <person name="Goodwin L."/>
            <person name="Copeland A."/>
            <person name="Lucas S."/>
            <person name="Han C."/>
            <person name="Pitluck S."/>
            <person name="Land M.L."/>
            <person name="Kyrpides N.C."/>
            <person name="Woyke T."/>
        </authorList>
    </citation>
    <scope>NUCLEOTIDE SEQUENCE [LARGE SCALE GENOMIC DNA]</scope>
    <source>
        <strain>ATCC 29413 / PCC 7937</strain>
    </source>
</reference>
<organism>
    <name type="scientific">Trichormus variabilis (strain ATCC 29413 / PCC 7937)</name>
    <name type="common">Anabaena variabilis</name>
    <dbReference type="NCBI Taxonomy" id="240292"/>
    <lineage>
        <taxon>Bacteria</taxon>
        <taxon>Bacillati</taxon>
        <taxon>Cyanobacteriota</taxon>
        <taxon>Cyanophyceae</taxon>
        <taxon>Nostocales</taxon>
        <taxon>Nostocaceae</taxon>
        <taxon>Trichormus</taxon>
    </lineage>
</organism>
<comment type="function">
    <text evidence="1">Binds directly to 16S ribosomal RNA.</text>
</comment>
<comment type="similarity">
    <text evidence="1">Belongs to the bacterial ribosomal protein bS20 family.</text>
</comment>
<comment type="sequence caution" evidence="3">
    <conflict type="erroneous initiation">
        <sequence resource="EMBL-CDS" id="ABA23804"/>
    </conflict>
</comment>
<proteinExistence type="inferred from homology"/>
<gene>
    <name evidence="1" type="primary">rpsT</name>
    <name evidence="1" type="synonym">rps20</name>
    <name type="ordered locus">Ava_4205</name>
</gene>